<evidence type="ECO:0000255" key="1">
    <source>
        <dbReference type="HAMAP-Rule" id="MF_00270"/>
    </source>
</evidence>
<evidence type="ECO:0000305" key="2"/>
<accession>C3LGS9</accession>
<name>RS18_BACAC</name>
<comment type="function">
    <text evidence="1">Binds as a heterodimer with protein bS6 to the central domain of the 16S rRNA, where it helps stabilize the platform of the 30S subunit.</text>
</comment>
<comment type="subunit">
    <text evidence="1">Part of the 30S ribosomal subunit. Forms a tight heterodimer with protein bS6.</text>
</comment>
<comment type="similarity">
    <text evidence="1">Belongs to the bacterial ribosomal protein bS18 family.</text>
</comment>
<organism>
    <name type="scientific">Bacillus anthracis (strain CDC 684 / NRRL 3495)</name>
    <dbReference type="NCBI Taxonomy" id="568206"/>
    <lineage>
        <taxon>Bacteria</taxon>
        <taxon>Bacillati</taxon>
        <taxon>Bacillota</taxon>
        <taxon>Bacilli</taxon>
        <taxon>Bacillales</taxon>
        <taxon>Bacillaceae</taxon>
        <taxon>Bacillus</taxon>
        <taxon>Bacillus cereus group</taxon>
    </lineage>
</organism>
<feature type="chain" id="PRO_1000196515" description="Small ribosomal subunit protein bS18">
    <location>
        <begin position="1"/>
        <end position="77"/>
    </location>
</feature>
<dbReference type="EMBL" id="CP001215">
    <property type="protein sequence ID" value="ACP15007.1"/>
    <property type="molecule type" value="Genomic_DNA"/>
</dbReference>
<dbReference type="RefSeq" id="WP_000918874.1">
    <property type="nucleotide sequence ID" value="NC_012581.1"/>
</dbReference>
<dbReference type="SMR" id="C3LGS9"/>
<dbReference type="GeneID" id="92885945"/>
<dbReference type="KEGG" id="bah:BAMEG_5773"/>
<dbReference type="HOGENOM" id="CLU_148710_2_2_9"/>
<dbReference type="GO" id="GO:0022627">
    <property type="term" value="C:cytosolic small ribosomal subunit"/>
    <property type="evidence" value="ECO:0007669"/>
    <property type="project" value="TreeGrafter"/>
</dbReference>
<dbReference type="GO" id="GO:0070181">
    <property type="term" value="F:small ribosomal subunit rRNA binding"/>
    <property type="evidence" value="ECO:0007669"/>
    <property type="project" value="TreeGrafter"/>
</dbReference>
<dbReference type="GO" id="GO:0003735">
    <property type="term" value="F:structural constituent of ribosome"/>
    <property type="evidence" value="ECO:0007669"/>
    <property type="project" value="InterPro"/>
</dbReference>
<dbReference type="GO" id="GO:0006412">
    <property type="term" value="P:translation"/>
    <property type="evidence" value="ECO:0007669"/>
    <property type="project" value="UniProtKB-UniRule"/>
</dbReference>
<dbReference type="FunFam" id="4.10.640.10:FF:000003">
    <property type="entry name" value="30S ribosomal protein S18"/>
    <property type="match status" value="1"/>
</dbReference>
<dbReference type="Gene3D" id="4.10.640.10">
    <property type="entry name" value="Ribosomal protein S18"/>
    <property type="match status" value="1"/>
</dbReference>
<dbReference type="HAMAP" id="MF_00270">
    <property type="entry name" value="Ribosomal_bS18"/>
    <property type="match status" value="1"/>
</dbReference>
<dbReference type="InterPro" id="IPR001648">
    <property type="entry name" value="Ribosomal_bS18"/>
</dbReference>
<dbReference type="InterPro" id="IPR018275">
    <property type="entry name" value="Ribosomal_bS18_CS"/>
</dbReference>
<dbReference type="InterPro" id="IPR036870">
    <property type="entry name" value="Ribosomal_bS18_sf"/>
</dbReference>
<dbReference type="NCBIfam" id="TIGR00165">
    <property type="entry name" value="S18"/>
    <property type="match status" value="1"/>
</dbReference>
<dbReference type="PANTHER" id="PTHR13479">
    <property type="entry name" value="30S RIBOSOMAL PROTEIN S18"/>
    <property type="match status" value="1"/>
</dbReference>
<dbReference type="PANTHER" id="PTHR13479:SF40">
    <property type="entry name" value="SMALL RIBOSOMAL SUBUNIT PROTEIN BS18M"/>
    <property type="match status" value="1"/>
</dbReference>
<dbReference type="Pfam" id="PF01084">
    <property type="entry name" value="Ribosomal_S18"/>
    <property type="match status" value="1"/>
</dbReference>
<dbReference type="PRINTS" id="PR00974">
    <property type="entry name" value="RIBOSOMALS18"/>
</dbReference>
<dbReference type="SUPFAM" id="SSF46911">
    <property type="entry name" value="Ribosomal protein S18"/>
    <property type="match status" value="1"/>
</dbReference>
<dbReference type="PROSITE" id="PS00057">
    <property type="entry name" value="RIBOSOMAL_S18"/>
    <property type="match status" value="1"/>
</dbReference>
<proteinExistence type="inferred from homology"/>
<keyword id="KW-0687">Ribonucleoprotein</keyword>
<keyword id="KW-0689">Ribosomal protein</keyword>
<keyword id="KW-0694">RNA-binding</keyword>
<keyword id="KW-0699">rRNA-binding</keyword>
<reference key="1">
    <citation type="submission" date="2008-10" db="EMBL/GenBank/DDBJ databases">
        <title>Genome sequence of Bacillus anthracis str. CDC 684.</title>
        <authorList>
            <person name="Dodson R.J."/>
            <person name="Munk A.C."/>
            <person name="Brettin T."/>
            <person name="Bruce D."/>
            <person name="Detter C."/>
            <person name="Tapia R."/>
            <person name="Han C."/>
            <person name="Sutton G."/>
            <person name="Sims D."/>
        </authorList>
    </citation>
    <scope>NUCLEOTIDE SEQUENCE [LARGE SCALE GENOMIC DNA]</scope>
    <source>
        <strain>CDC 684 / NRRL 3495</strain>
    </source>
</reference>
<protein>
    <recommendedName>
        <fullName evidence="1">Small ribosomal subunit protein bS18</fullName>
    </recommendedName>
    <alternativeName>
        <fullName evidence="2">30S ribosomal protein S18</fullName>
    </alternativeName>
</protein>
<sequence length="77" mass="8829">MAGRKGGRAKRRKVCFFTSNGITRIDYKDVDLLKRFVSERGKILPRRVTGTSAKYQRKLTVAIKRARQMALLPYVGE</sequence>
<gene>
    <name evidence="1" type="primary">rpsR</name>
    <name type="ordered locus">BAMEG_5773</name>
</gene>